<name>KHSE_METMP</name>
<evidence type="ECO:0000255" key="1">
    <source>
        <dbReference type="HAMAP-Rule" id="MF_00384"/>
    </source>
</evidence>
<evidence type="ECO:0000269" key="2">
    <source>
    </source>
</evidence>
<sequence length="301" mass="32453">MKKVKVCSPGTSANLGPGYDIFGLALSNPYDIVEVEKTENGITISVEGEKAEEIPTNVDENTAGVVAKKMIEDFKIESGIHIHIIKGIKPGSGLGSSSASCAGIAFALNELFELKLSKLELVKYSSLGEAVAAGAPHADNVAPAIFGGFTLTTSYEPLEVLHIPVDLEVLVALPNIQVSTKTAREILPKEIPIKDMVNNVGKAAGMVYALYNNDLDLFGRYMSKDCVVEPCRANLIDGYTEVKEKVKDMVYGITISGSGPAIITIPKKEHVIDIENIFKEVWNCPVYYTKVGPGCYVEEIE</sequence>
<proteinExistence type="evidence at protein level"/>
<gene>
    <name evidence="1" type="primary">thrB</name>
    <name type="ordered locus">MMP0295</name>
</gene>
<organism>
    <name type="scientific">Methanococcus maripaludis (strain DSM 14266 / JCM 13030 / NBRC 101832 / S2 / LL)</name>
    <dbReference type="NCBI Taxonomy" id="267377"/>
    <lineage>
        <taxon>Archaea</taxon>
        <taxon>Methanobacteriati</taxon>
        <taxon>Methanobacteriota</taxon>
        <taxon>Methanomada group</taxon>
        <taxon>Methanococci</taxon>
        <taxon>Methanococcales</taxon>
        <taxon>Methanococcaceae</taxon>
        <taxon>Methanococcus</taxon>
    </lineage>
</organism>
<protein>
    <recommendedName>
        <fullName evidence="1">Homoserine kinase</fullName>
        <shortName evidence="1">HK</shortName>
        <shortName evidence="1">HSK</shortName>
        <ecNumber evidence="1">2.7.1.39</ecNumber>
    </recommendedName>
</protein>
<comment type="function">
    <text evidence="1 2">Catalyzes the ATP-dependent phosphorylation of L-homoserine to L-homoserine phosphate.</text>
</comment>
<comment type="catalytic activity">
    <reaction evidence="1 2">
        <text>L-homoserine + ATP = O-phospho-L-homoserine + ADP + H(+)</text>
        <dbReference type="Rhea" id="RHEA:13985"/>
        <dbReference type="ChEBI" id="CHEBI:15378"/>
        <dbReference type="ChEBI" id="CHEBI:30616"/>
        <dbReference type="ChEBI" id="CHEBI:57476"/>
        <dbReference type="ChEBI" id="CHEBI:57590"/>
        <dbReference type="ChEBI" id="CHEBI:456216"/>
        <dbReference type="EC" id="2.7.1.39"/>
    </reaction>
</comment>
<comment type="pathway">
    <text evidence="1">Amino-acid biosynthesis; L-threonine biosynthesis; L-threonine from L-aspartate: step 4/5.</text>
</comment>
<comment type="subcellular location">
    <subcellularLocation>
        <location evidence="1">Cytoplasm</location>
    </subcellularLocation>
</comment>
<comment type="similarity">
    <text evidence="1">Belongs to the GHMP kinase family. Homoserine kinase subfamily.</text>
</comment>
<feature type="chain" id="PRO_0000156586" description="Homoserine kinase">
    <location>
        <begin position="1"/>
        <end position="301"/>
    </location>
</feature>
<feature type="binding site" evidence="1">
    <location>
        <begin position="89"/>
        <end position="99"/>
    </location>
    <ligand>
        <name>ATP</name>
        <dbReference type="ChEBI" id="CHEBI:30616"/>
    </ligand>
</feature>
<keyword id="KW-0028">Amino-acid biosynthesis</keyword>
<keyword id="KW-0067">ATP-binding</keyword>
<keyword id="KW-0963">Cytoplasm</keyword>
<keyword id="KW-0418">Kinase</keyword>
<keyword id="KW-0547">Nucleotide-binding</keyword>
<keyword id="KW-1185">Reference proteome</keyword>
<keyword id="KW-0791">Threonine biosynthesis</keyword>
<keyword id="KW-0808">Transferase</keyword>
<dbReference type="EC" id="2.7.1.39" evidence="1"/>
<dbReference type="EMBL" id="BX950229">
    <property type="protein sequence ID" value="CAF29851.1"/>
    <property type="molecule type" value="Genomic_DNA"/>
</dbReference>
<dbReference type="RefSeq" id="WP_011170239.1">
    <property type="nucleotide sequence ID" value="NC_005791.1"/>
</dbReference>
<dbReference type="SMR" id="Q6M0H5"/>
<dbReference type="STRING" id="267377.MMP0295"/>
<dbReference type="EnsemblBacteria" id="CAF29851">
    <property type="protein sequence ID" value="CAF29851"/>
    <property type="gene ID" value="MMP0295"/>
</dbReference>
<dbReference type="GeneID" id="2761624"/>
<dbReference type="KEGG" id="mmp:MMP0295"/>
<dbReference type="PATRIC" id="fig|267377.15.peg.298"/>
<dbReference type="eggNOG" id="arCOG01027">
    <property type="taxonomic scope" value="Archaea"/>
</dbReference>
<dbReference type="HOGENOM" id="CLU_041243_1_1_2"/>
<dbReference type="OrthoDB" id="28273at2157"/>
<dbReference type="UniPathway" id="UPA00050">
    <property type="reaction ID" value="UER00064"/>
</dbReference>
<dbReference type="Proteomes" id="UP000000590">
    <property type="component" value="Chromosome"/>
</dbReference>
<dbReference type="GO" id="GO:0005737">
    <property type="term" value="C:cytoplasm"/>
    <property type="evidence" value="ECO:0007669"/>
    <property type="project" value="UniProtKB-SubCell"/>
</dbReference>
<dbReference type="GO" id="GO:0005524">
    <property type="term" value="F:ATP binding"/>
    <property type="evidence" value="ECO:0007669"/>
    <property type="project" value="UniProtKB-UniRule"/>
</dbReference>
<dbReference type="GO" id="GO:0004413">
    <property type="term" value="F:homoserine kinase activity"/>
    <property type="evidence" value="ECO:0007669"/>
    <property type="project" value="UniProtKB-UniRule"/>
</dbReference>
<dbReference type="GO" id="GO:0009088">
    <property type="term" value="P:threonine biosynthetic process"/>
    <property type="evidence" value="ECO:0007669"/>
    <property type="project" value="UniProtKB-UniRule"/>
</dbReference>
<dbReference type="Gene3D" id="3.30.230.10">
    <property type="match status" value="1"/>
</dbReference>
<dbReference type="Gene3D" id="3.30.70.890">
    <property type="entry name" value="GHMP kinase, C-terminal domain"/>
    <property type="match status" value="1"/>
</dbReference>
<dbReference type="HAMAP" id="MF_00384">
    <property type="entry name" value="Homoser_kinase"/>
    <property type="match status" value="1"/>
</dbReference>
<dbReference type="InterPro" id="IPR013750">
    <property type="entry name" value="GHMP_kinase_C_dom"/>
</dbReference>
<dbReference type="InterPro" id="IPR036554">
    <property type="entry name" value="GHMP_kinase_C_sf"/>
</dbReference>
<dbReference type="InterPro" id="IPR006204">
    <property type="entry name" value="GHMP_kinase_N_dom"/>
</dbReference>
<dbReference type="InterPro" id="IPR006203">
    <property type="entry name" value="GHMP_knse_ATP-bd_CS"/>
</dbReference>
<dbReference type="InterPro" id="IPR000870">
    <property type="entry name" value="Homoserine_kinase"/>
</dbReference>
<dbReference type="InterPro" id="IPR020568">
    <property type="entry name" value="Ribosomal_Su5_D2-typ_SF"/>
</dbReference>
<dbReference type="InterPro" id="IPR014721">
    <property type="entry name" value="Ribsml_uS5_D2-typ_fold_subgr"/>
</dbReference>
<dbReference type="NCBIfam" id="NF002288">
    <property type="entry name" value="PRK01212.1-4"/>
    <property type="match status" value="1"/>
</dbReference>
<dbReference type="NCBIfam" id="TIGR00191">
    <property type="entry name" value="thrB"/>
    <property type="match status" value="1"/>
</dbReference>
<dbReference type="PANTHER" id="PTHR20861:SF1">
    <property type="entry name" value="HOMOSERINE KINASE"/>
    <property type="match status" value="1"/>
</dbReference>
<dbReference type="PANTHER" id="PTHR20861">
    <property type="entry name" value="HOMOSERINE/4-DIPHOSPHOCYTIDYL-2-C-METHYL-D-ERYTHRITOL KINASE"/>
    <property type="match status" value="1"/>
</dbReference>
<dbReference type="Pfam" id="PF08544">
    <property type="entry name" value="GHMP_kinases_C"/>
    <property type="match status" value="1"/>
</dbReference>
<dbReference type="Pfam" id="PF00288">
    <property type="entry name" value="GHMP_kinases_N"/>
    <property type="match status" value="1"/>
</dbReference>
<dbReference type="PIRSF" id="PIRSF000676">
    <property type="entry name" value="Homoser_kin"/>
    <property type="match status" value="1"/>
</dbReference>
<dbReference type="PRINTS" id="PR00958">
    <property type="entry name" value="HOMSERKINASE"/>
</dbReference>
<dbReference type="SUPFAM" id="SSF55060">
    <property type="entry name" value="GHMP Kinase, C-terminal domain"/>
    <property type="match status" value="1"/>
</dbReference>
<dbReference type="SUPFAM" id="SSF54211">
    <property type="entry name" value="Ribosomal protein S5 domain 2-like"/>
    <property type="match status" value="1"/>
</dbReference>
<dbReference type="PROSITE" id="PS00627">
    <property type="entry name" value="GHMP_KINASES_ATP"/>
    <property type="match status" value="1"/>
</dbReference>
<reference key="1">
    <citation type="journal article" date="2004" name="J. Bacteriol.">
        <title>Complete genome sequence of the genetically tractable hydrogenotrophic methanogen Methanococcus maripaludis.</title>
        <authorList>
            <person name="Hendrickson E.L."/>
            <person name="Kaul R."/>
            <person name="Zhou Y."/>
            <person name="Bovee D."/>
            <person name="Chapman P."/>
            <person name="Chung J."/>
            <person name="Conway de Macario E."/>
            <person name="Dodsworth J.A."/>
            <person name="Gillett W."/>
            <person name="Graham D.E."/>
            <person name="Hackett M."/>
            <person name="Haydock A.K."/>
            <person name="Kang A."/>
            <person name="Land M.L."/>
            <person name="Levy R."/>
            <person name="Lie T.J."/>
            <person name="Major T.A."/>
            <person name="Moore B.C."/>
            <person name="Porat I."/>
            <person name="Palmeiri A."/>
            <person name="Rouse G."/>
            <person name="Saenphimmachak C."/>
            <person name="Soell D."/>
            <person name="Van Dien S."/>
            <person name="Wang T."/>
            <person name="Whitman W.B."/>
            <person name="Xia Q."/>
            <person name="Zhang Y."/>
            <person name="Larimer F.W."/>
            <person name="Olson M.V."/>
            <person name="Leigh J.A."/>
        </authorList>
    </citation>
    <scope>NUCLEOTIDE SEQUENCE [LARGE SCALE GENOMIC DNA]</scope>
    <source>
        <strain>DSM 14266 / JCM 13030 / NBRC 101832 / S2 / LL</strain>
    </source>
</reference>
<reference key="2">
    <citation type="journal article" date="2009" name="Biochem. J.">
        <title>Convergent evolution of coenzyme M biosynthesis in the Methanosarcinales: cysteate synthase evolved from an ancestral threonine synthase.</title>
        <authorList>
            <person name="Graham D.E."/>
            <person name="Taylor S.M."/>
            <person name="Wolf R.Z."/>
            <person name="Namboori S.C."/>
        </authorList>
    </citation>
    <scope>FUNCTION AS A HOMOSERINE KINASE</scope>
    <scope>CATALYTIC ACTIVITY</scope>
</reference>
<accession>Q6M0H5</accession>